<protein>
    <recommendedName>
        <fullName evidence="1">Alanine--tRNA ligase</fullName>
        <ecNumber evidence="1">6.1.1.7</ecNumber>
    </recommendedName>
    <alternativeName>
        <fullName evidence="1">Alanyl-tRNA synthetase</fullName>
        <shortName evidence="1">AlaRS</shortName>
    </alternativeName>
</protein>
<accession>Q6AQ16</accession>
<evidence type="ECO:0000255" key="1">
    <source>
        <dbReference type="HAMAP-Rule" id="MF_00036"/>
    </source>
</evidence>
<feature type="chain" id="PRO_0000075106" description="Alanine--tRNA ligase">
    <location>
        <begin position="1"/>
        <end position="882"/>
    </location>
</feature>
<feature type="binding site" evidence="1">
    <location>
        <position position="571"/>
    </location>
    <ligand>
        <name>Zn(2+)</name>
        <dbReference type="ChEBI" id="CHEBI:29105"/>
    </ligand>
</feature>
<feature type="binding site" evidence="1">
    <location>
        <position position="575"/>
    </location>
    <ligand>
        <name>Zn(2+)</name>
        <dbReference type="ChEBI" id="CHEBI:29105"/>
    </ligand>
</feature>
<feature type="binding site" evidence="1">
    <location>
        <position position="673"/>
    </location>
    <ligand>
        <name>Zn(2+)</name>
        <dbReference type="ChEBI" id="CHEBI:29105"/>
    </ligand>
</feature>
<feature type="binding site" evidence="1">
    <location>
        <position position="677"/>
    </location>
    <ligand>
        <name>Zn(2+)</name>
        <dbReference type="ChEBI" id="CHEBI:29105"/>
    </ligand>
</feature>
<gene>
    <name evidence="1" type="primary">alaS</name>
    <name type="ordered locus">DP0828</name>
</gene>
<reference key="1">
    <citation type="journal article" date="2004" name="Environ. Microbiol.">
        <title>The genome of Desulfotalea psychrophila, a sulfate-reducing bacterium from permanently cold Arctic sediments.</title>
        <authorList>
            <person name="Rabus R."/>
            <person name="Ruepp A."/>
            <person name="Frickey T."/>
            <person name="Rattei T."/>
            <person name="Fartmann B."/>
            <person name="Stark M."/>
            <person name="Bauer M."/>
            <person name="Zibat A."/>
            <person name="Lombardot T."/>
            <person name="Becker I."/>
            <person name="Amann J."/>
            <person name="Gellner K."/>
            <person name="Teeling H."/>
            <person name="Leuschner W.D."/>
            <person name="Gloeckner F.-O."/>
            <person name="Lupas A.N."/>
            <person name="Amann R."/>
            <person name="Klenk H.-P."/>
        </authorList>
    </citation>
    <scope>NUCLEOTIDE SEQUENCE [LARGE SCALE GENOMIC DNA]</scope>
    <source>
        <strain>DSM 12343 / LSv54</strain>
    </source>
</reference>
<proteinExistence type="inferred from homology"/>
<dbReference type="EC" id="6.1.1.7" evidence="1"/>
<dbReference type="EMBL" id="CR522870">
    <property type="protein sequence ID" value="CAG35557.1"/>
    <property type="molecule type" value="Genomic_DNA"/>
</dbReference>
<dbReference type="RefSeq" id="WP_011188073.1">
    <property type="nucleotide sequence ID" value="NC_006138.1"/>
</dbReference>
<dbReference type="SMR" id="Q6AQ16"/>
<dbReference type="STRING" id="177439.DP0828"/>
<dbReference type="KEGG" id="dps:DP0828"/>
<dbReference type="eggNOG" id="COG0013">
    <property type="taxonomic scope" value="Bacteria"/>
</dbReference>
<dbReference type="HOGENOM" id="CLU_004485_1_1_7"/>
<dbReference type="OrthoDB" id="9803884at2"/>
<dbReference type="Proteomes" id="UP000000602">
    <property type="component" value="Chromosome"/>
</dbReference>
<dbReference type="GO" id="GO:0005829">
    <property type="term" value="C:cytosol"/>
    <property type="evidence" value="ECO:0007669"/>
    <property type="project" value="TreeGrafter"/>
</dbReference>
<dbReference type="GO" id="GO:0004813">
    <property type="term" value="F:alanine-tRNA ligase activity"/>
    <property type="evidence" value="ECO:0007669"/>
    <property type="project" value="UniProtKB-UniRule"/>
</dbReference>
<dbReference type="GO" id="GO:0002161">
    <property type="term" value="F:aminoacyl-tRNA deacylase activity"/>
    <property type="evidence" value="ECO:0007669"/>
    <property type="project" value="TreeGrafter"/>
</dbReference>
<dbReference type="GO" id="GO:0005524">
    <property type="term" value="F:ATP binding"/>
    <property type="evidence" value="ECO:0007669"/>
    <property type="project" value="UniProtKB-UniRule"/>
</dbReference>
<dbReference type="GO" id="GO:0000049">
    <property type="term" value="F:tRNA binding"/>
    <property type="evidence" value="ECO:0007669"/>
    <property type="project" value="UniProtKB-KW"/>
</dbReference>
<dbReference type="GO" id="GO:0008270">
    <property type="term" value="F:zinc ion binding"/>
    <property type="evidence" value="ECO:0007669"/>
    <property type="project" value="UniProtKB-UniRule"/>
</dbReference>
<dbReference type="GO" id="GO:0006419">
    <property type="term" value="P:alanyl-tRNA aminoacylation"/>
    <property type="evidence" value="ECO:0007669"/>
    <property type="project" value="UniProtKB-UniRule"/>
</dbReference>
<dbReference type="GO" id="GO:0045892">
    <property type="term" value="P:negative regulation of DNA-templated transcription"/>
    <property type="evidence" value="ECO:0007669"/>
    <property type="project" value="TreeGrafter"/>
</dbReference>
<dbReference type="CDD" id="cd00673">
    <property type="entry name" value="AlaRS_core"/>
    <property type="match status" value="1"/>
</dbReference>
<dbReference type="FunFam" id="3.10.310.40:FF:000001">
    <property type="entry name" value="Alanine--tRNA ligase"/>
    <property type="match status" value="1"/>
</dbReference>
<dbReference type="FunFam" id="3.30.54.20:FF:000001">
    <property type="entry name" value="Alanine--tRNA ligase"/>
    <property type="match status" value="1"/>
</dbReference>
<dbReference type="FunFam" id="3.30.930.10:FF:000004">
    <property type="entry name" value="Alanine--tRNA ligase"/>
    <property type="match status" value="1"/>
</dbReference>
<dbReference type="FunFam" id="3.30.980.10:FF:000004">
    <property type="entry name" value="Alanine--tRNA ligase, cytoplasmic"/>
    <property type="match status" value="1"/>
</dbReference>
<dbReference type="Gene3D" id="2.40.30.130">
    <property type="match status" value="1"/>
</dbReference>
<dbReference type="Gene3D" id="3.10.310.40">
    <property type="match status" value="1"/>
</dbReference>
<dbReference type="Gene3D" id="3.30.54.20">
    <property type="match status" value="1"/>
</dbReference>
<dbReference type="Gene3D" id="6.10.250.550">
    <property type="match status" value="1"/>
</dbReference>
<dbReference type="Gene3D" id="3.30.930.10">
    <property type="entry name" value="Bira Bifunctional Protein, Domain 2"/>
    <property type="match status" value="1"/>
</dbReference>
<dbReference type="Gene3D" id="3.30.980.10">
    <property type="entry name" value="Threonyl-trna Synthetase, Chain A, domain 2"/>
    <property type="match status" value="1"/>
</dbReference>
<dbReference type="HAMAP" id="MF_00036_B">
    <property type="entry name" value="Ala_tRNA_synth_B"/>
    <property type="match status" value="1"/>
</dbReference>
<dbReference type="InterPro" id="IPR045864">
    <property type="entry name" value="aa-tRNA-synth_II/BPL/LPL"/>
</dbReference>
<dbReference type="InterPro" id="IPR002318">
    <property type="entry name" value="Ala-tRNA-lgiase_IIc"/>
</dbReference>
<dbReference type="InterPro" id="IPR018162">
    <property type="entry name" value="Ala-tRNA-ligase_IIc_anticod-bd"/>
</dbReference>
<dbReference type="InterPro" id="IPR018165">
    <property type="entry name" value="Ala-tRNA-synth_IIc_core"/>
</dbReference>
<dbReference type="InterPro" id="IPR018164">
    <property type="entry name" value="Ala-tRNA-synth_IIc_N"/>
</dbReference>
<dbReference type="InterPro" id="IPR050058">
    <property type="entry name" value="Ala-tRNA_ligase"/>
</dbReference>
<dbReference type="InterPro" id="IPR023033">
    <property type="entry name" value="Ala_tRNA_ligase_euk/bac"/>
</dbReference>
<dbReference type="InterPro" id="IPR003156">
    <property type="entry name" value="DHHA1_dom"/>
</dbReference>
<dbReference type="InterPro" id="IPR018163">
    <property type="entry name" value="Thr/Ala-tRNA-synth_IIc_edit"/>
</dbReference>
<dbReference type="InterPro" id="IPR009000">
    <property type="entry name" value="Transl_B-barrel_sf"/>
</dbReference>
<dbReference type="InterPro" id="IPR012947">
    <property type="entry name" value="tRNA_SAD"/>
</dbReference>
<dbReference type="NCBIfam" id="TIGR00344">
    <property type="entry name" value="alaS"/>
    <property type="match status" value="1"/>
</dbReference>
<dbReference type="PANTHER" id="PTHR11777:SF9">
    <property type="entry name" value="ALANINE--TRNA LIGASE, CYTOPLASMIC"/>
    <property type="match status" value="1"/>
</dbReference>
<dbReference type="PANTHER" id="PTHR11777">
    <property type="entry name" value="ALANYL-TRNA SYNTHETASE"/>
    <property type="match status" value="1"/>
</dbReference>
<dbReference type="Pfam" id="PF02272">
    <property type="entry name" value="DHHA1"/>
    <property type="match status" value="1"/>
</dbReference>
<dbReference type="Pfam" id="PF01411">
    <property type="entry name" value="tRNA-synt_2c"/>
    <property type="match status" value="1"/>
</dbReference>
<dbReference type="Pfam" id="PF07973">
    <property type="entry name" value="tRNA_SAD"/>
    <property type="match status" value="1"/>
</dbReference>
<dbReference type="PRINTS" id="PR00980">
    <property type="entry name" value="TRNASYNTHALA"/>
</dbReference>
<dbReference type="SMART" id="SM00863">
    <property type="entry name" value="tRNA_SAD"/>
    <property type="match status" value="1"/>
</dbReference>
<dbReference type="SUPFAM" id="SSF55681">
    <property type="entry name" value="Class II aaRS and biotin synthetases"/>
    <property type="match status" value="1"/>
</dbReference>
<dbReference type="SUPFAM" id="SSF101353">
    <property type="entry name" value="Putative anticodon-binding domain of alanyl-tRNA synthetase (AlaRS)"/>
    <property type="match status" value="1"/>
</dbReference>
<dbReference type="SUPFAM" id="SSF55186">
    <property type="entry name" value="ThrRS/AlaRS common domain"/>
    <property type="match status" value="1"/>
</dbReference>
<dbReference type="SUPFAM" id="SSF50447">
    <property type="entry name" value="Translation proteins"/>
    <property type="match status" value="1"/>
</dbReference>
<dbReference type="PROSITE" id="PS50860">
    <property type="entry name" value="AA_TRNA_LIGASE_II_ALA"/>
    <property type="match status" value="1"/>
</dbReference>
<sequence length="882" mass="94583">MKGNEIRSRFLEYFKGNGHTVAESSSLVPKDDPTLLFTNAGMVQFKRVFMGDDKRGYVRAVTSQKCVRAGGKHNDLENVGYTARHHTFFEMLGNFSFGDYFKEEAIRLAWNFLTVELGLPAEKMWVSVFEDDDEAFALWEKVEDLPKGRIVRLGEKDNFWAMGDTGPCGPCSEIHIDQGVGSSPCDNPNCAVGCDCDRFLELWNLVFMQFNRAEDGSLTALPRPSIDTGMGLERVAAVLQGKFNNYDSDLFAPIIAVLEDISGVKYGAAADTDTAIRVIADHARATSFLVADGVLPSNEGRGYVLRRIMRRAVRYGKKLGLEKPFMDRVTKAVCAEMQNAYPQLVATAALLEKVVNNEEERFRETLEHGLVQLDEKISQLLTSGGDAVIDGPFIFKLYDTFGFPFDIVRDIALERGVGFDEAGFATAMAEQRAKSRASRKGEGVKLHDEGVKALADAGKKAEFLGYEGLEADSVVEGLLSEQGSGVEKLVAGEKGRVFVAATPFYAEAGGQMGDRGSVRWQGGQASVYATQAEGTGLILHDLLVEEGELSLGLEVTLQVDDEERKATASNHSATHLLQAALISVLGDHVKQSGSLVGPERLRFDFTNFSQLTAAEIAQVETLVNEQIRNNAVIATDVLSKQEAIAGGATALFGEKYDDDVRVVSMGDYSRELCGGTHVGATGEIGLFVILSESGIAAGVRRIEALTGRAALAYVQGRLSTGNELADLLSCKSGDLVPKVESLLTAVKEGEKRVAQLAGQLASSGLDDLLNNALTVAGIKVVVAEVPLENAKALRELGDKVRDNLESGIAVIGGAVGGKVALLAIVTKDLVDRIQAGRIVSEVSGIVGGKGGGRPDMAQAGGTMPDKLSEAIASVPAIIEAML</sequence>
<organism>
    <name type="scientific">Desulfotalea psychrophila (strain LSv54 / DSM 12343)</name>
    <dbReference type="NCBI Taxonomy" id="177439"/>
    <lineage>
        <taxon>Bacteria</taxon>
        <taxon>Pseudomonadati</taxon>
        <taxon>Thermodesulfobacteriota</taxon>
        <taxon>Desulfobulbia</taxon>
        <taxon>Desulfobulbales</taxon>
        <taxon>Desulfocapsaceae</taxon>
        <taxon>Desulfotalea</taxon>
    </lineage>
</organism>
<name>SYA_DESPS</name>
<keyword id="KW-0030">Aminoacyl-tRNA synthetase</keyword>
<keyword id="KW-0067">ATP-binding</keyword>
<keyword id="KW-0963">Cytoplasm</keyword>
<keyword id="KW-0436">Ligase</keyword>
<keyword id="KW-0479">Metal-binding</keyword>
<keyword id="KW-0547">Nucleotide-binding</keyword>
<keyword id="KW-0648">Protein biosynthesis</keyword>
<keyword id="KW-1185">Reference proteome</keyword>
<keyword id="KW-0694">RNA-binding</keyword>
<keyword id="KW-0820">tRNA-binding</keyword>
<keyword id="KW-0862">Zinc</keyword>
<comment type="function">
    <text evidence="1">Catalyzes the attachment of alanine to tRNA(Ala) in a two-step reaction: alanine is first activated by ATP to form Ala-AMP and then transferred to the acceptor end of tRNA(Ala). Also edits incorrectly charged Ser-tRNA(Ala) and Gly-tRNA(Ala) via its editing domain.</text>
</comment>
<comment type="catalytic activity">
    <reaction evidence="1">
        <text>tRNA(Ala) + L-alanine + ATP = L-alanyl-tRNA(Ala) + AMP + diphosphate</text>
        <dbReference type="Rhea" id="RHEA:12540"/>
        <dbReference type="Rhea" id="RHEA-COMP:9657"/>
        <dbReference type="Rhea" id="RHEA-COMP:9923"/>
        <dbReference type="ChEBI" id="CHEBI:30616"/>
        <dbReference type="ChEBI" id="CHEBI:33019"/>
        <dbReference type="ChEBI" id="CHEBI:57972"/>
        <dbReference type="ChEBI" id="CHEBI:78442"/>
        <dbReference type="ChEBI" id="CHEBI:78497"/>
        <dbReference type="ChEBI" id="CHEBI:456215"/>
        <dbReference type="EC" id="6.1.1.7"/>
    </reaction>
</comment>
<comment type="cofactor">
    <cofactor evidence="1">
        <name>Zn(2+)</name>
        <dbReference type="ChEBI" id="CHEBI:29105"/>
    </cofactor>
    <text evidence="1">Binds 1 zinc ion per subunit.</text>
</comment>
<comment type="subcellular location">
    <subcellularLocation>
        <location evidence="1">Cytoplasm</location>
    </subcellularLocation>
</comment>
<comment type="domain">
    <text evidence="1">Consists of three domains; the N-terminal catalytic domain, the editing domain and the C-terminal C-Ala domain. The editing domain removes incorrectly charged amino acids, while the C-Ala domain, along with tRNA(Ala), serves as a bridge to cooperatively bring together the editing and aminoacylation centers thus stimulating deacylation of misacylated tRNAs.</text>
</comment>
<comment type="similarity">
    <text evidence="1">Belongs to the class-II aminoacyl-tRNA synthetase family.</text>
</comment>